<name>LEU1_ARTS2</name>
<comment type="function">
    <text evidence="1">Catalyzes the condensation of the acetyl group of acetyl-CoA with 3-methyl-2-oxobutanoate (2-ketoisovalerate) to form 3-carboxy-3-hydroxy-4-methylpentanoate (2-isopropylmalate).</text>
</comment>
<comment type="catalytic activity">
    <reaction evidence="1">
        <text>3-methyl-2-oxobutanoate + acetyl-CoA + H2O = (2S)-2-isopropylmalate + CoA + H(+)</text>
        <dbReference type="Rhea" id="RHEA:21524"/>
        <dbReference type="ChEBI" id="CHEBI:1178"/>
        <dbReference type="ChEBI" id="CHEBI:11851"/>
        <dbReference type="ChEBI" id="CHEBI:15377"/>
        <dbReference type="ChEBI" id="CHEBI:15378"/>
        <dbReference type="ChEBI" id="CHEBI:57287"/>
        <dbReference type="ChEBI" id="CHEBI:57288"/>
        <dbReference type="EC" id="2.3.3.13"/>
    </reaction>
</comment>
<comment type="cofactor">
    <cofactor evidence="1">
        <name>Mg(2+)</name>
        <dbReference type="ChEBI" id="CHEBI:18420"/>
    </cofactor>
</comment>
<comment type="pathway">
    <text evidence="1">Amino-acid biosynthesis; L-leucine biosynthesis; L-leucine from 3-methyl-2-oxobutanoate: step 1/4.</text>
</comment>
<comment type="subunit">
    <text evidence="1">Homodimer.</text>
</comment>
<comment type="subcellular location">
    <subcellularLocation>
        <location evidence="1">Cytoplasm</location>
    </subcellularLocation>
</comment>
<comment type="similarity">
    <text evidence="1">Belongs to the alpha-IPM synthase/homocitrate synthase family. LeuA type 2 subfamily.</text>
</comment>
<dbReference type="EC" id="2.3.3.13" evidence="1"/>
<dbReference type="EMBL" id="CP000454">
    <property type="protein sequence ID" value="ABK03606.1"/>
    <property type="molecule type" value="Genomic_DNA"/>
</dbReference>
<dbReference type="RefSeq" id="WP_011692070.1">
    <property type="nucleotide sequence ID" value="NC_008541.1"/>
</dbReference>
<dbReference type="SMR" id="A0JX36"/>
<dbReference type="STRING" id="290399.Arth_2226"/>
<dbReference type="KEGG" id="art:Arth_2226"/>
<dbReference type="eggNOG" id="COG0119">
    <property type="taxonomic scope" value="Bacteria"/>
</dbReference>
<dbReference type="HOGENOM" id="CLU_004588_3_0_11"/>
<dbReference type="OrthoDB" id="9803573at2"/>
<dbReference type="UniPathway" id="UPA00048">
    <property type="reaction ID" value="UER00070"/>
</dbReference>
<dbReference type="Proteomes" id="UP000000754">
    <property type="component" value="Chromosome"/>
</dbReference>
<dbReference type="GO" id="GO:0005737">
    <property type="term" value="C:cytoplasm"/>
    <property type="evidence" value="ECO:0007669"/>
    <property type="project" value="UniProtKB-SubCell"/>
</dbReference>
<dbReference type="GO" id="GO:0003852">
    <property type="term" value="F:2-isopropylmalate synthase activity"/>
    <property type="evidence" value="ECO:0007669"/>
    <property type="project" value="UniProtKB-UniRule"/>
</dbReference>
<dbReference type="GO" id="GO:0003985">
    <property type="term" value="F:acetyl-CoA C-acetyltransferase activity"/>
    <property type="evidence" value="ECO:0007669"/>
    <property type="project" value="UniProtKB-UniRule"/>
</dbReference>
<dbReference type="GO" id="GO:0000287">
    <property type="term" value="F:magnesium ion binding"/>
    <property type="evidence" value="ECO:0007669"/>
    <property type="project" value="UniProtKB-UniRule"/>
</dbReference>
<dbReference type="GO" id="GO:0009098">
    <property type="term" value="P:L-leucine biosynthetic process"/>
    <property type="evidence" value="ECO:0007669"/>
    <property type="project" value="UniProtKB-UniRule"/>
</dbReference>
<dbReference type="CDD" id="cd07942">
    <property type="entry name" value="DRE_TIM_LeuA"/>
    <property type="match status" value="1"/>
</dbReference>
<dbReference type="FunFam" id="3.20.20.70:FF:000045">
    <property type="entry name" value="2-isopropylmalate synthase"/>
    <property type="match status" value="1"/>
</dbReference>
<dbReference type="FunFam" id="3.30.160.270:FF:000006">
    <property type="entry name" value="2-isopropylmalate synthase"/>
    <property type="match status" value="1"/>
</dbReference>
<dbReference type="Gene3D" id="3.30.160.270">
    <property type="match status" value="1"/>
</dbReference>
<dbReference type="Gene3D" id="3.20.20.70">
    <property type="entry name" value="Aldolase class I"/>
    <property type="match status" value="1"/>
</dbReference>
<dbReference type="HAMAP" id="MF_00572">
    <property type="entry name" value="LeuA_type2"/>
    <property type="match status" value="1"/>
</dbReference>
<dbReference type="InterPro" id="IPR013709">
    <property type="entry name" value="2-isopropylmalate_synth_dimer"/>
</dbReference>
<dbReference type="InterPro" id="IPR002034">
    <property type="entry name" value="AIPM/Hcit_synth_CS"/>
</dbReference>
<dbReference type="InterPro" id="IPR013785">
    <property type="entry name" value="Aldolase_TIM"/>
</dbReference>
<dbReference type="InterPro" id="IPR005668">
    <property type="entry name" value="IPM_Synthase"/>
</dbReference>
<dbReference type="InterPro" id="IPR054692">
    <property type="entry name" value="LeuA-like_post-cat"/>
</dbReference>
<dbReference type="InterPro" id="IPR036230">
    <property type="entry name" value="LeuA_allosteric_dom_sf"/>
</dbReference>
<dbReference type="InterPro" id="IPR039371">
    <property type="entry name" value="LeuA_N_DRE-TIM"/>
</dbReference>
<dbReference type="InterPro" id="IPR000891">
    <property type="entry name" value="PYR_CT"/>
</dbReference>
<dbReference type="NCBIfam" id="TIGR00970">
    <property type="entry name" value="leuA_yeast"/>
    <property type="match status" value="1"/>
</dbReference>
<dbReference type="NCBIfam" id="NF002991">
    <property type="entry name" value="PRK03739.1"/>
    <property type="match status" value="1"/>
</dbReference>
<dbReference type="PANTHER" id="PTHR46911">
    <property type="match status" value="1"/>
</dbReference>
<dbReference type="PANTHER" id="PTHR46911:SF1">
    <property type="entry name" value="2-ISOPROPYLMALATE SYNTHASE"/>
    <property type="match status" value="1"/>
</dbReference>
<dbReference type="Pfam" id="PF00682">
    <property type="entry name" value="HMGL-like"/>
    <property type="match status" value="1"/>
</dbReference>
<dbReference type="Pfam" id="PF22615">
    <property type="entry name" value="IPMS_D2"/>
    <property type="match status" value="1"/>
</dbReference>
<dbReference type="Pfam" id="PF08502">
    <property type="entry name" value="LeuA_dimer"/>
    <property type="match status" value="1"/>
</dbReference>
<dbReference type="SMART" id="SM00917">
    <property type="entry name" value="LeuA_dimer"/>
    <property type="match status" value="1"/>
</dbReference>
<dbReference type="SUPFAM" id="SSF110921">
    <property type="entry name" value="2-isopropylmalate synthase LeuA, allosteric (dimerisation) domain"/>
    <property type="match status" value="1"/>
</dbReference>
<dbReference type="SUPFAM" id="SSF51569">
    <property type="entry name" value="Aldolase"/>
    <property type="match status" value="1"/>
</dbReference>
<dbReference type="SUPFAM" id="SSF89000">
    <property type="entry name" value="post-HMGL domain-like"/>
    <property type="match status" value="1"/>
</dbReference>
<dbReference type="PROSITE" id="PS00815">
    <property type="entry name" value="AIPM_HOMOCIT_SYNTH_1"/>
    <property type="match status" value="1"/>
</dbReference>
<dbReference type="PROSITE" id="PS00816">
    <property type="entry name" value="AIPM_HOMOCIT_SYNTH_2"/>
    <property type="match status" value="1"/>
</dbReference>
<dbReference type="PROSITE" id="PS50991">
    <property type="entry name" value="PYR_CT"/>
    <property type="match status" value="1"/>
</dbReference>
<accession>A0JX36</accession>
<feature type="chain" id="PRO_1000025028" description="2-isopropylmalate synthase">
    <location>
        <begin position="1"/>
        <end position="579"/>
    </location>
</feature>
<feature type="domain" description="Pyruvate carboxyltransferase" evidence="1">
    <location>
        <begin position="40"/>
        <end position="314"/>
    </location>
</feature>
<feature type="region of interest" description="Regulatory domain" evidence="1">
    <location>
        <begin position="456"/>
        <end position="579"/>
    </location>
</feature>
<feature type="binding site" evidence="1">
    <location>
        <position position="49"/>
    </location>
    <ligand>
        <name>Mg(2+)</name>
        <dbReference type="ChEBI" id="CHEBI:18420"/>
    </ligand>
</feature>
<feature type="binding site" evidence="1">
    <location>
        <position position="253"/>
    </location>
    <ligand>
        <name>Mg(2+)</name>
        <dbReference type="ChEBI" id="CHEBI:18420"/>
    </ligand>
</feature>
<feature type="binding site" evidence="1">
    <location>
        <position position="255"/>
    </location>
    <ligand>
        <name>Mg(2+)</name>
        <dbReference type="ChEBI" id="CHEBI:18420"/>
    </ligand>
</feature>
<feature type="binding site" evidence="1">
    <location>
        <position position="289"/>
    </location>
    <ligand>
        <name>Mg(2+)</name>
        <dbReference type="ChEBI" id="CHEBI:18420"/>
    </ligand>
</feature>
<keyword id="KW-0028">Amino-acid biosynthesis</keyword>
<keyword id="KW-0100">Branched-chain amino acid biosynthesis</keyword>
<keyword id="KW-0963">Cytoplasm</keyword>
<keyword id="KW-0432">Leucine biosynthesis</keyword>
<keyword id="KW-0460">Magnesium</keyword>
<keyword id="KW-0479">Metal-binding</keyword>
<keyword id="KW-1185">Reference proteome</keyword>
<keyword id="KW-0808">Transferase</keyword>
<sequence>MRNAQKPSGMPVHRYMPFQDQITVELPDRTWPDKVITKAPRWCAVDLRDGNQALIDPMSPARKMKMFDLLVRMGYKEIEVGFPSASQTDFDFVRQLIEGNHIPDDVTIQVLTQAREHLIERTYESLVGAKQAIVHLYNSTSVLQRRVVFNQDEDGILDIALQGARLCKKYEETLADTHITYEYSPESFTGTELEYAVRVCNAVADVFEASADSQVIINLPATVEMATPNVYADSIEWMSRHLHPREGIILSLHPHNDRGTGVAAAELGYLAGADRIEGCLFGNGERTGNVDLVTLGLNMFVQGIDPMIDFSDIDDVRRTVEYCNQLPVAERSPYGGDLVFTAFSGSHQDAIKKGFEALEKDAAAAGKDVADYTWQVPYLPVDPKDLGRSYEAVIRVNSQSGKGGVAYLLKNEHSLDLPRRAQIEFSGVIQKRTDTVGGEVSGAQLWQIFQDEYLPSSKEDGQWGRYSLGSFSTETDDDGAMTLHATVTVDGVQVRRTGSGNGPIAALLSILGQDGVDVRVLDYSEHALSEGGNARAAAYVECAVGERVLWGVGIDSNTTTSSLKAVISAVNRAIRDAQA</sequence>
<organism>
    <name type="scientific">Arthrobacter sp. (strain FB24)</name>
    <dbReference type="NCBI Taxonomy" id="290399"/>
    <lineage>
        <taxon>Bacteria</taxon>
        <taxon>Bacillati</taxon>
        <taxon>Actinomycetota</taxon>
        <taxon>Actinomycetes</taxon>
        <taxon>Micrococcales</taxon>
        <taxon>Micrococcaceae</taxon>
        <taxon>Arthrobacter</taxon>
    </lineage>
</organism>
<proteinExistence type="inferred from homology"/>
<protein>
    <recommendedName>
        <fullName evidence="1">2-isopropylmalate synthase</fullName>
        <ecNumber evidence="1">2.3.3.13</ecNumber>
    </recommendedName>
    <alternativeName>
        <fullName evidence="1">Alpha-IPM synthase</fullName>
    </alternativeName>
    <alternativeName>
        <fullName evidence="1">Alpha-isopropylmalate synthase</fullName>
    </alternativeName>
</protein>
<gene>
    <name evidence="1" type="primary">leuA</name>
    <name type="ordered locus">Arth_2226</name>
</gene>
<evidence type="ECO:0000255" key="1">
    <source>
        <dbReference type="HAMAP-Rule" id="MF_00572"/>
    </source>
</evidence>
<reference key="1">
    <citation type="journal article" date="2013" name="Stand. Genomic Sci.">
        <title>Complete genome sequence of Arthrobacter sp. strain FB24.</title>
        <authorList>
            <person name="Nakatsu C.H."/>
            <person name="Barabote R."/>
            <person name="Thompson S."/>
            <person name="Bruce D."/>
            <person name="Detter C."/>
            <person name="Brettin T."/>
            <person name="Han C."/>
            <person name="Beasley F."/>
            <person name="Chen W."/>
            <person name="Konopka A."/>
            <person name="Xie G."/>
        </authorList>
    </citation>
    <scope>NUCLEOTIDE SEQUENCE [LARGE SCALE GENOMIC DNA]</scope>
    <source>
        <strain>FB24</strain>
    </source>
</reference>